<sequence length="516" mass="59256">MPPPGKVPRKENLGLQCEWGSCSFVCSAMEEFCEHVTQHLQQHLQGSGEEEEEEEDLLEEEFSCLWRECGFCSPDNSADLIRHVYFHCYHTKLKQWGLQALQSQADLSPCILDFQSRNLIPDIPDHFLCLWEHCENSFDNPEWFYRHVEAHSQCCEYQVVGKDNNVVLCGWKGCTCTFKDRFKLREHLRSHTQEKVVACPTCGGMFANNTKFLDHIRRQSSLDQQHFQCSHCSKRFATERLLRDHMRNHVNHYKCPLCDMTCPLPSSLRNHMRFRHSEARPFKCDCCDYSCKNLIDLRKHLDTHSKEPAYSCDFENCTFSARSLYSIKSHYRKVHEGDSEPRYRCHVCDKCFTRGNNLTVHLRKKHQFKWPSGHPRFRYKEHEDGYMRLQLVRYESVELTQQLLRQPQEGSGLGASLNESSLQDIILETVPGEPGPQEEAEEEGGGGEGIALPASQGTSSPIIHVVNQTNAQGEREVVYYVLFEAPGEPPPASEPPSGGVMGELQGAAEEPEVQMV</sequence>
<proteinExistence type="evidence at transcript level"/>
<feature type="chain" id="PRO_0000281105" description="Histone H4 transcription factor">
    <location>
        <begin position="1"/>
        <end position="516"/>
    </location>
</feature>
<feature type="zinc finger region" description="C2H2-type 1" evidence="2">
    <location>
        <begin position="15"/>
        <end position="39"/>
    </location>
</feature>
<feature type="zinc finger region" description="C2H2-type 2" evidence="2">
    <location>
        <begin position="127"/>
        <end position="151"/>
    </location>
</feature>
<feature type="zinc finger region" description="C2H2-type 3" evidence="2">
    <location>
        <begin position="167"/>
        <end position="191"/>
    </location>
</feature>
<feature type="zinc finger region" description="C2H2-type 4; degenerate" evidence="2">
    <location>
        <begin position="197"/>
        <end position="219"/>
    </location>
</feature>
<feature type="zinc finger region" description="C2H2-type 5" evidence="2">
    <location>
        <begin position="227"/>
        <end position="249"/>
    </location>
</feature>
<feature type="zinc finger region" description="C2H2-type 6" evidence="2">
    <location>
        <begin position="253"/>
        <end position="276"/>
    </location>
</feature>
<feature type="zinc finger region" description="C2H2-type 7" evidence="2">
    <location>
        <begin position="282"/>
        <end position="304"/>
    </location>
</feature>
<feature type="zinc finger region" description="C2H2-type 8" evidence="2">
    <location>
        <begin position="310"/>
        <end position="335"/>
    </location>
</feature>
<feature type="zinc finger region" description="C2H2-type 9" evidence="2">
    <location>
        <begin position="343"/>
        <end position="366"/>
    </location>
</feature>
<feature type="region of interest" description="Interaction with NPAT" evidence="1">
    <location>
        <begin position="371"/>
        <end position="516"/>
    </location>
</feature>
<feature type="region of interest" description="Required for activation of histone H4 transcription and contributes to DNA-binding" evidence="1">
    <location>
        <begin position="372"/>
        <end position="405"/>
    </location>
</feature>
<feature type="region of interest" description="Disordered" evidence="3">
    <location>
        <begin position="429"/>
        <end position="456"/>
    </location>
</feature>
<feature type="region of interest" description="Disordered" evidence="3">
    <location>
        <begin position="486"/>
        <end position="516"/>
    </location>
</feature>
<feature type="compositionally biased region" description="Acidic residues" evidence="3">
    <location>
        <begin position="436"/>
        <end position="445"/>
    </location>
</feature>
<keyword id="KW-0010">Activator</keyword>
<keyword id="KW-0238">DNA-binding</keyword>
<keyword id="KW-0479">Metal-binding</keyword>
<keyword id="KW-0539">Nucleus</keyword>
<keyword id="KW-1185">Reference proteome</keyword>
<keyword id="KW-0677">Repeat</keyword>
<keyword id="KW-0678">Repressor</keyword>
<keyword id="KW-0804">Transcription</keyword>
<keyword id="KW-0805">Transcription regulation</keyword>
<keyword id="KW-0832">Ubl conjugation</keyword>
<keyword id="KW-0862">Zinc</keyword>
<keyword id="KW-0863">Zinc-finger</keyword>
<reference key="1">
    <citation type="submission" date="2005-11" db="EMBL/GenBank/DDBJ databases">
        <authorList>
            <consortium name="NIH - Mammalian Gene Collection (MGC) project"/>
        </authorList>
    </citation>
    <scope>NUCLEOTIDE SEQUENCE [LARGE SCALE MRNA]</scope>
    <source>
        <strain>Crossbred X Angus</strain>
        <tissue>Liver</tissue>
    </source>
</reference>
<evidence type="ECO:0000250" key="1"/>
<evidence type="ECO:0000255" key="2">
    <source>
        <dbReference type="PROSITE-ProRule" id="PRU00042"/>
    </source>
</evidence>
<evidence type="ECO:0000256" key="3">
    <source>
        <dbReference type="SAM" id="MobiDB-lite"/>
    </source>
</evidence>
<dbReference type="EMBL" id="BC109865">
    <property type="protein sequence ID" value="AAI09866.1"/>
    <property type="molecule type" value="mRNA"/>
</dbReference>
<dbReference type="RefSeq" id="NP_001033620.1">
    <property type="nucleotide sequence ID" value="NM_001038531.2"/>
</dbReference>
<dbReference type="SMR" id="Q2TBP2"/>
<dbReference type="FunCoup" id="Q2TBP2">
    <property type="interactions" value="3614"/>
</dbReference>
<dbReference type="STRING" id="9913.ENSBTAP00000019990"/>
<dbReference type="PaxDb" id="9913-ENSBTAP00000019990"/>
<dbReference type="GeneID" id="511965"/>
<dbReference type="KEGG" id="bta:511965"/>
<dbReference type="CTD" id="25988"/>
<dbReference type="eggNOG" id="KOG3608">
    <property type="taxonomic scope" value="Eukaryota"/>
</dbReference>
<dbReference type="InParanoid" id="Q2TBP2"/>
<dbReference type="OrthoDB" id="10039931at2759"/>
<dbReference type="Proteomes" id="UP000009136">
    <property type="component" value="Unplaced"/>
</dbReference>
<dbReference type="GO" id="GO:0005634">
    <property type="term" value="C:nucleus"/>
    <property type="evidence" value="ECO:0007669"/>
    <property type="project" value="UniProtKB-SubCell"/>
</dbReference>
<dbReference type="GO" id="GO:0000981">
    <property type="term" value="F:DNA-binding transcription factor activity, RNA polymerase II-specific"/>
    <property type="evidence" value="ECO:0000318"/>
    <property type="project" value="GO_Central"/>
</dbReference>
<dbReference type="GO" id="GO:0000978">
    <property type="term" value="F:RNA polymerase II cis-regulatory region sequence-specific DNA binding"/>
    <property type="evidence" value="ECO:0000318"/>
    <property type="project" value="GO_Central"/>
</dbReference>
<dbReference type="GO" id="GO:0008270">
    <property type="term" value="F:zinc ion binding"/>
    <property type="evidence" value="ECO:0007669"/>
    <property type="project" value="UniProtKB-KW"/>
</dbReference>
<dbReference type="GO" id="GO:0045892">
    <property type="term" value="P:negative regulation of DNA-templated transcription"/>
    <property type="evidence" value="ECO:0007669"/>
    <property type="project" value="UniProtKB-ARBA"/>
</dbReference>
<dbReference type="GO" id="GO:0006357">
    <property type="term" value="P:regulation of transcription by RNA polymerase II"/>
    <property type="evidence" value="ECO:0000318"/>
    <property type="project" value="GO_Central"/>
</dbReference>
<dbReference type="FunFam" id="3.30.160.60:FF:002166">
    <property type="entry name" value="Histone H4 transcription factor"/>
    <property type="match status" value="1"/>
</dbReference>
<dbReference type="FunFam" id="3.30.160.60:FF:002279">
    <property type="entry name" value="Histone H4 transcription factor"/>
    <property type="match status" value="1"/>
</dbReference>
<dbReference type="Gene3D" id="3.30.160.60">
    <property type="entry name" value="Classic Zinc Finger"/>
    <property type="match status" value="4"/>
</dbReference>
<dbReference type="InterPro" id="IPR036236">
    <property type="entry name" value="Znf_C2H2_sf"/>
</dbReference>
<dbReference type="InterPro" id="IPR013087">
    <property type="entry name" value="Znf_C2H2_type"/>
</dbReference>
<dbReference type="InterPro" id="IPR051574">
    <property type="entry name" value="ZnF_E-box_Homeobox"/>
</dbReference>
<dbReference type="PANTHER" id="PTHR24391:SF26">
    <property type="entry name" value="HISTONE H4 TRANSCRIPTION FACTOR"/>
    <property type="match status" value="1"/>
</dbReference>
<dbReference type="PANTHER" id="PTHR24391">
    <property type="entry name" value="HISTONE H4 TRANSCRIPTION FACTOR-RELATED"/>
    <property type="match status" value="1"/>
</dbReference>
<dbReference type="Pfam" id="PF00096">
    <property type="entry name" value="zf-C2H2"/>
    <property type="match status" value="2"/>
</dbReference>
<dbReference type="Pfam" id="PF13894">
    <property type="entry name" value="zf-C2H2_4"/>
    <property type="match status" value="1"/>
</dbReference>
<dbReference type="SMART" id="SM00355">
    <property type="entry name" value="ZnF_C2H2"/>
    <property type="match status" value="10"/>
</dbReference>
<dbReference type="SUPFAM" id="SSF57667">
    <property type="entry name" value="beta-beta-alpha zinc fingers"/>
    <property type="match status" value="4"/>
</dbReference>
<dbReference type="PROSITE" id="PS00028">
    <property type="entry name" value="ZINC_FINGER_C2H2_1"/>
    <property type="match status" value="7"/>
</dbReference>
<dbReference type="PROSITE" id="PS50157">
    <property type="entry name" value="ZINC_FINGER_C2H2_2"/>
    <property type="match status" value="6"/>
</dbReference>
<name>HINFP_BOVIN</name>
<protein>
    <recommendedName>
        <fullName>Histone H4 transcription factor</fullName>
    </recommendedName>
    <alternativeName>
        <fullName>Histone nuclear factor P</fullName>
        <shortName>HiNF-P</shortName>
    </alternativeName>
    <alternativeName>
        <fullName>MBD2-interacting zinc finger protein</fullName>
    </alternativeName>
    <alternativeName>
        <fullName>Methyl-CpG-binding protein 2-interacting zinc finger protein</fullName>
    </alternativeName>
</protein>
<organism>
    <name type="scientific">Bos taurus</name>
    <name type="common">Bovine</name>
    <dbReference type="NCBI Taxonomy" id="9913"/>
    <lineage>
        <taxon>Eukaryota</taxon>
        <taxon>Metazoa</taxon>
        <taxon>Chordata</taxon>
        <taxon>Craniata</taxon>
        <taxon>Vertebrata</taxon>
        <taxon>Euteleostomi</taxon>
        <taxon>Mammalia</taxon>
        <taxon>Eutheria</taxon>
        <taxon>Laurasiatheria</taxon>
        <taxon>Artiodactyla</taxon>
        <taxon>Ruminantia</taxon>
        <taxon>Pecora</taxon>
        <taxon>Bovidae</taxon>
        <taxon>Bovinae</taxon>
        <taxon>Bos</taxon>
    </lineage>
</organism>
<comment type="function">
    <text evidence="1">Transcriptional repressor that binds to the consensus sequence 5'-CGGACGTT-3' and to the RB1 promoter. Transcriptional activator that promotes histone H4 gene transcription at the G1/S phase transition in conjunction with NPAT. Also activates transcription of the ATM and PRKDC genes. Autoregulates its expression by associating with its own promoter (By similarity).</text>
</comment>
<comment type="subunit">
    <text evidence="1">Binds MBD2 and a histone deacetylase complex. Interacts with NPAT (By similarity).</text>
</comment>
<comment type="subcellular location">
    <subcellularLocation>
        <location evidence="1">Nucleus</location>
    </subcellularLocation>
    <text evidence="1">Associated with discrete nuclear foci.</text>
</comment>
<comment type="PTM">
    <text evidence="1">Ubiquitinated. Ubiquitination may lead to proteasome-mediated degradation (By similarity).</text>
</comment>
<accession>Q2TBP2</accession>
<gene>
    <name type="primary">HINFP</name>
    <name type="synonym">MIZF</name>
</gene>